<protein>
    <recommendedName>
        <fullName evidence="6">Eukaryotic translation initiation factor 4E type 2</fullName>
        <shortName evidence="6">eIF-4E type 2</shortName>
        <shortName evidence="6">eIF4E type 2</shortName>
        <shortName evidence="6">eIF4E-2</shortName>
        <shortName evidence="6">mRNA cap-binding protein type 2</shortName>
    </recommendedName>
    <alternativeName>
        <fullName>Eukaryotic translation initiation factor 4E-like 3</fullName>
    </alternativeName>
    <alternativeName>
        <fullName evidence="6">eIF4E-like protein 4E-LP</fullName>
    </alternativeName>
</protein>
<sequence length="245" mass="28263">MNNKFDALKDDDSGDHDQNEENSTQKDGEKEKTDRDKSQSSGKRKAVVPGPAEHPLQYNYTFWYSRRTPGRPTSSQSYEQNIKQIGTFASVEQFWKFYSHMVRPGDLTGHSDFHLFKEGIKPMWEDDANKNGGKWIIRLRKGLASRCWENLILAMLGEQFMVGEEICGAVVSVRFQEDIISIWNKTASDQATTARIRDTLRRVLNLPPNTIMEYKTHTDSIKMPGRLGPQRLLFQNLWKPRLNVP</sequence>
<accession>Q8BMB3</accession>
<accession>O88503</accession>
<accession>Q3UCK2</accession>
<dbReference type="EMBL" id="AF068116">
    <property type="protein sequence ID" value="AAC19373.1"/>
    <property type="molecule type" value="mRNA"/>
</dbReference>
<dbReference type="EMBL" id="AK032965">
    <property type="protein sequence ID" value="BAC28102.1"/>
    <property type="molecule type" value="mRNA"/>
</dbReference>
<dbReference type="EMBL" id="AK150495">
    <property type="protein sequence ID" value="BAE29610.1"/>
    <property type="molecule type" value="mRNA"/>
</dbReference>
<dbReference type="EMBL" id="BC045153">
    <property type="protein sequence ID" value="AAH45153.1"/>
    <property type="molecule type" value="mRNA"/>
</dbReference>
<dbReference type="CCDS" id="CCDS35652.1"/>
<dbReference type="RefSeq" id="NP_001034259.1">
    <property type="nucleotide sequence ID" value="NM_001039170.1"/>
</dbReference>
<dbReference type="RefSeq" id="NP_075803.2">
    <property type="nucleotide sequence ID" value="NM_023314.3"/>
</dbReference>
<dbReference type="SMR" id="Q8BMB3"/>
<dbReference type="BioGRID" id="205093">
    <property type="interactions" value="4"/>
</dbReference>
<dbReference type="FunCoup" id="Q8BMB3">
    <property type="interactions" value="2660"/>
</dbReference>
<dbReference type="IntAct" id="Q8BMB3">
    <property type="interactions" value="3"/>
</dbReference>
<dbReference type="MINT" id="Q8BMB3"/>
<dbReference type="STRING" id="10090.ENSMUSP00000108859"/>
<dbReference type="iPTMnet" id="Q8BMB3"/>
<dbReference type="PhosphoSitePlus" id="Q8BMB3"/>
<dbReference type="PaxDb" id="10090-ENSMUSP00000108859"/>
<dbReference type="PeptideAtlas" id="Q8BMB3"/>
<dbReference type="ProteomicsDB" id="266946"/>
<dbReference type="Pumba" id="Q8BMB3"/>
<dbReference type="Antibodypedia" id="20222">
    <property type="antibodies" value="435 antibodies from 31 providers"/>
</dbReference>
<dbReference type="DNASU" id="26987"/>
<dbReference type="Ensembl" id="ENSMUST00000113233.8">
    <property type="protein sequence ID" value="ENSMUSP00000108859.2"/>
    <property type="gene ID" value="ENSMUSG00000026254.18"/>
</dbReference>
<dbReference type="GeneID" id="26987"/>
<dbReference type="KEGG" id="mmu:26987"/>
<dbReference type="UCSC" id="uc007bwk.1">
    <property type="organism name" value="mouse"/>
</dbReference>
<dbReference type="AGR" id="MGI:1914440"/>
<dbReference type="CTD" id="9470"/>
<dbReference type="MGI" id="MGI:1914440">
    <property type="gene designation" value="Eif4e2"/>
</dbReference>
<dbReference type="VEuPathDB" id="HostDB:ENSMUSG00000026254"/>
<dbReference type="eggNOG" id="KOG1669">
    <property type="taxonomic scope" value="Eukaryota"/>
</dbReference>
<dbReference type="GeneTree" id="ENSGT00940000154694"/>
<dbReference type="InParanoid" id="Q8BMB3"/>
<dbReference type="OrthoDB" id="590761at2759"/>
<dbReference type="TreeFam" id="TF101529"/>
<dbReference type="Reactome" id="R-MMU-1169408">
    <property type="pathway name" value="ISG15 antiviral mechanism"/>
</dbReference>
<dbReference type="BioGRID-ORCS" id="26987">
    <property type="hits" value="16 hits in 76 CRISPR screens"/>
</dbReference>
<dbReference type="ChiTaRS" id="Eif4e2">
    <property type="organism name" value="mouse"/>
</dbReference>
<dbReference type="PRO" id="PR:Q8BMB3"/>
<dbReference type="Proteomes" id="UP000000589">
    <property type="component" value="Chromosome 1"/>
</dbReference>
<dbReference type="RNAct" id="Q8BMB3">
    <property type="molecule type" value="protein"/>
</dbReference>
<dbReference type="Bgee" id="ENSMUSG00000026254">
    <property type="expression patterns" value="Expressed in internal carotid artery and 264 other cell types or tissues"/>
</dbReference>
<dbReference type="ExpressionAtlas" id="Q8BMB3">
    <property type="expression patterns" value="baseline and differential"/>
</dbReference>
<dbReference type="GO" id="GO:0005737">
    <property type="term" value="C:cytoplasm"/>
    <property type="evidence" value="ECO:0000250"/>
    <property type="project" value="UniProtKB"/>
</dbReference>
<dbReference type="GO" id="GO:0000932">
    <property type="term" value="C:P-body"/>
    <property type="evidence" value="ECO:0000250"/>
    <property type="project" value="UniProtKB"/>
</dbReference>
<dbReference type="GO" id="GO:0003723">
    <property type="term" value="F:RNA binding"/>
    <property type="evidence" value="ECO:0007669"/>
    <property type="project" value="UniProtKB-KW"/>
</dbReference>
<dbReference type="GO" id="GO:0003743">
    <property type="term" value="F:translation initiation factor activity"/>
    <property type="evidence" value="ECO:0007669"/>
    <property type="project" value="UniProtKB-KW"/>
</dbReference>
<dbReference type="GO" id="GO:0001701">
    <property type="term" value="P:in utero embryonic development"/>
    <property type="evidence" value="ECO:0000315"/>
    <property type="project" value="MGI"/>
</dbReference>
<dbReference type="GO" id="GO:0035278">
    <property type="term" value="P:miRNA-mediated gene silencing by inhibition of translation"/>
    <property type="evidence" value="ECO:0000250"/>
    <property type="project" value="UniProtKB"/>
</dbReference>
<dbReference type="GO" id="GO:0017148">
    <property type="term" value="P:negative regulation of translation"/>
    <property type="evidence" value="ECO:0000266"/>
    <property type="project" value="MGI"/>
</dbReference>
<dbReference type="FunFam" id="3.30.760.10:FF:000001">
    <property type="entry name" value="Eukaryotic translation initiation factor 4E type 2 isoformX2"/>
    <property type="match status" value="1"/>
</dbReference>
<dbReference type="Gene3D" id="3.30.760.10">
    <property type="entry name" value="RNA Cap, Translation Initiation Factor Eif4e"/>
    <property type="match status" value="1"/>
</dbReference>
<dbReference type="InterPro" id="IPR023398">
    <property type="entry name" value="TIF_eIF4e-like"/>
</dbReference>
<dbReference type="InterPro" id="IPR001040">
    <property type="entry name" value="TIF_eIF_4E"/>
</dbReference>
<dbReference type="InterPro" id="IPR019770">
    <property type="entry name" value="TIF_eIF_4E_CS"/>
</dbReference>
<dbReference type="PANTHER" id="PTHR11960">
    <property type="entry name" value="EUKARYOTIC TRANSLATION INITIATION FACTOR 4E RELATED"/>
    <property type="match status" value="1"/>
</dbReference>
<dbReference type="PANTHER" id="PTHR11960:SF17">
    <property type="entry name" value="EUKARYOTIC TRANSLATION INITIATION FACTOR 4E TYPE 2"/>
    <property type="match status" value="1"/>
</dbReference>
<dbReference type="Pfam" id="PF01652">
    <property type="entry name" value="IF4E"/>
    <property type="match status" value="1"/>
</dbReference>
<dbReference type="SUPFAM" id="SSF55418">
    <property type="entry name" value="eIF4e-like"/>
    <property type="match status" value="1"/>
</dbReference>
<dbReference type="PROSITE" id="PS00813">
    <property type="entry name" value="IF4E"/>
    <property type="match status" value="1"/>
</dbReference>
<name>IF4E2_MOUSE</name>
<evidence type="ECO:0000250" key="1">
    <source>
        <dbReference type="UniProtKB" id="O60573"/>
    </source>
</evidence>
<evidence type="ECO:0000250" key="2">
    <source>
        <dbReference type="UniProtKB" id="P06730"/>
    </source>
</evidence>
<evidence type="ECO:0000256" key="3">
    <source>
        <dbReference type="SAM" id="MobiDB-lite"/>
    </source>
</evidence>
<evidence type="ECO:0000269" key="4">
    <source>
    </source>
</evidence>
<evidence type="ECO:0000269" key="5">
    <source>
    </source>
</evidence>
<evidence type="ECO:0000303" key="6">
    <source>
    </source>
</evidence>
<evidence type="ECO:0000305" key="7"/>
<evidence type="ECO:0000312" key="8">
    <source>
        <dbReference type="MGI" id="MGI:1914440"/>
    </source>
</evidence>
<organism>
    <name type="scientific">Mus musculus</name>
    <name type="common">Mouse</name>
    <dbReference type="NCBI Taxonomy" id="10090"/>
    <lineage>
        <taxon>Eukaryota</taxon>
        <taxon>Metazoa</taxon>
        <taxon>Chordata</taxon>
        <taxon>Craniata</taxon>
        <taxon>Vertebrata</taxon>
        <taxon>Euteleostomi</taxon>
        <taxon>Mammalia</taxon>
        <taxon>Eutheria</taxon>
        <taxon>Euarchontoglires</taxon>
        <taxon>Glires</taxon>
        <taxon>Rodentia</taxon>
        <taxon>Myomorpha</taxon>
        <taxon>Muroidea</taxon>
        <taxon>Muridae</taxon>
        <taxon>Murinae</taxon>
        <taxon>Mus</taxon>
        <taxon>Mus</taxon>
    </lineage>
</organism>
<feature type="chain" id="PRO_0000193665" description="Eukaryotic translation initiation factor 4E type 2">
    <location>
        <begin position="1"/>
        <end position="245"/>
    </location>
</feature>
<feature type="region of interest" description="Disordered" evidence="3">
    <location>
        <begin position="1"/>
        <end position="52"/>
    </location>
</feature>
<feature type="region of interest" description="EIF4EBP1/2/3 binding" evidence="1">
    <location>
        <begin position="54"/>
        <end position="57"/>
    </location>
</feature>
<feature type="region of interest" description="EIF4EBP1/2/3 binding" evidence="1">
    <location>
        <begin position="95"/>
        <end position="99"/>
    </location>
</feature>
<feature type="region of interest" description="EIF4EBP1/2/3 binding" evidence="1">
    <location>
        <begin position="150"/>
        <end position="157"/>
    </location>
</feature>
<feature type="compositionally biased region" description="Basic and acidic residues" evidence="3">
    <location>
        <begin position="1"/>
        <end position="38"/>
    </location>
</feature>
<feature type="binding site" evidence="2">
    <location>
        <begin position="78"/>
        <end position="79"/>
    </location>
    <ligand>
        <name>mRNA</name>
        <dbReference type="ChEBI" id="CHEBI:33699"/>
    </ligand>
    <ligandPart>
        <name>N(7)-methylguanosine 5'-triphosphate group</name>
        <dbReference type="ChEBI" id="CHEBI:74429"/>
        <note>m7GTP residue in mRNA cap</note>
    </ligandPart>
</feature>
<feature type="binding site" evidence="1">
    <location>
        <position position="110"/>
    </location>
    <ligand>
        <name>mRNA</name>
        <dbReference type="ChEBI" id="CHEBI:33699"/>
    </ligand>
    <ligandPart>
        <name>N(7)-methylguanosine 5'-triphosphate group</name>
        <dbReference type="ChEBI" id="CHEBI:74429"/>
        <note>m7GTP residue in mRNA cap</note>
    </ligandPart>
</feature>
<feature type="binding site" evidence="1">
    <location>
        <begin position="124"/>
        <end position="125"/>
    </location>
    <ligand>
        <name>mRNA</name>
        <dbReference type="ChEBI" id="CHEBI:33699"/>
    </ligand>
    <ligandPart>
        <name>N(7)-methylguanosine 5'-triphosphate group</name>
        <dbReference type="ChEBI" id="CHEBI:74429"/>
        <note>m7GTP residue in mRNA cap</note>
    </ligandPart>
</feature>
<feature type="binding site" evidence="1">
    <location>
        <begin position="174"/>
        <end position="179"/>
    </location>
    <ligand>
        <name>mRNA</name>
        <dbReference type="ChEBI" id="CHEBI:33699"/>
    </ligand>
    <ligandPart>
        <name>N(7)-methylguanosine 5'-triphosphate group</name>
        <dbReference type="ChEBI" id="CHEBI:74429"/>
        <note>m7GTP residue in mRNA cap</note>
    </ligandPart>
</feature>
<feature type="binding site" evidence="2">
    <location>
        <begin position="222"/>
        <end position="224"/>
    </location>
    <ligand>
        <name>mRNA</name>
        <dbReference type="ChEBI" id="CHEBI:33699"/>
    </ligand>
    <ligandPart>
        <name>N(7)-methylguanosine 5'-triphosphate group</name>
        <dbReference type="ChEBI" id="CHEBI:74429"/>
        <note>m7GTP residue in mRNA cap</note>
    </ligandPart>
</feature>
<feature type="modified residue" description="Phosphoserine" evidence="1">
    <location>
        <position position="13"/>
    </location>
</feature>
<feature type="modified residue" description="N6-acetyllysine; alternate" evidence="1">
    <location>
        <position position="134"/>
    </location>
</feature>
<feature type="cross-link" description="Glycyl lysine isopeptide (Lys-Gly) (interchain with G-Cter in ISG15); alternate" evidence="1">
    <location>
        <position position="134"/>
    </location>
</feature>
<feature type="cross-link" description="Glycyl lysine isopeptide (Lys-Gly) (interchain with G-Cter in ISG15)" evidence="1">
    <location>
        <position position="222"/>
    </location>
</feature>
<feature type="sequence conflict" description="In Ref. 1; AAC19373." evidence="7" ref="1">
    <original>L</original>
    <variation>F</variation>
    <location>
        <position position="200"/>
    </location>
</feature>
<proteinExistence type="evidence at protein level"/>
<gene>
    <name evidence="6 8" type="primary">Eif4e2</name>
    <name type="synonym">Eif4el3</name>
</gene>
<keyword id="KW-0007">Acetylation</keyword>
<keyword id="KW-0963">Cytoplasm</keyword>
<keyword id="KW-0396">Initiation factor</keyword>
<keyword id="KW-1017">Isopeptide bond</keyword>
<keyword id="KW-0597">Phosphoprotein</keyword>
<keyword id="KW-0648">Protein biosynthesis</keyword>
<keyword id="KW-1185">Reference proteome</keyword>
<keyword id="KW-0694">RNA-binding</keyword>
<keyword id="KW-0943">RNA-mediated gene silencing</keyword>
<keyword id="KW-0810">Translation regulation</keyword>
<keyword id="KW-0832">Ubl conjugation</keyword>
<reference key="1">
    <citation type="journal article" date="2004" name="Eur. J. Biochem.">
        <title>Characterization of mammalian eIF4E-family members.</title>
        <authorList>
            <person name="Joshi B."/>
            <person name="Cameron A."/>
            <person name="Jagus R."/>
        </authorList>
    </citation>
    <scope>NUCLEOTIDE SEQUENCE [MRNA]</scope>
    <scope>FUNCTION</scope>
    <scope>INTERACTION WITH EIF4EBP1; EIF4EBP2 AND EIF4EBP3</scope>
    <scope>TISSUE SPECIFICITY</scope>
    <source>
        <strain>NIH Swiss</strain>
    </source>
</reference>
<reference key="2">
    <citation type="journal article" date="2005" name="Science">
        <title>The transcriptional landscape of the mammalian genome.</title>
        <authorList>
            <person name="Carninci P."/>
            <person name="Kasukawa T."/>
            <person name="Katayama S."/>
            <person name="Gough J."/>
            <person name="Frith M.C."/>
            <person name="Maeda N."/>
            <person name="Oyama R."/>
            <person name="Ravasi T."/>
            <person name="Lenhard B."/>
            <person name="Wells C."/>
            <person name="Kodzius R."/>
            <person name="Shimokawa K."/>
            <person name="Bajic V.B."/>
            <person name="Brenner S.E."/>
            <person name="Batalov S."/>
            <person name="Forrest A.R."/>
            <person name="Zavolan M."/>
            <person name="Davis M.J."/>
            <person name="Wilming L.G."/>
            <person name="Aidinis V."/>
            <person name="Allen J.E."/>
            <person name="Ambesi-Impiombato A."/>
            <person name="Apweiler R."/>
            <person name="Aturaliya R.N."/>
            <person name="Bailey T.L."/>
            <person name="Bansal M."/>
            <person name="Baxter L."/>
            <person name="Beisel K.W."/>
            <person name="Bersano T."/>
            <person name="Bono H."/>
            <person name="Chalk A.M."/>
            <person name="Chiu K.P."/>
            <person name="Choudhary V."/>
            <person name="Christoffels A."/>
            <person name="Clutterbuck D.R."/>
            <person name="Crowe M.L."/>
            <person name="Dalla E."/>
            <person name="Dalrymple B.P."/>
            <person name="de Bono B."/>
            <person name="Della Gatta G."/>
            <person name="di Bernardo D."/>
            <person name="Down T."/>
            <person name="Engstrom P."/>
            <person name="Fagiolini M."/>
            <person name="Faulkner G."/>
            <person name="Fletcher C.F."/>
            <person name="Fukushima T."/>
            <person name="Furuno M."/>
            <person name="Futaki S."/>
            <person name="Gariboldi M."/>
            <person name="Georgii-Hemming P."/>
            <person name="Gingeras T.R."/>
            <person name="Gojobori T."/>
            <person name="Green R.E."/>
            <person name="Gustincich S."/>
            <person name="Harbers M."/>
            <person name="Hayashi Y."/>
            <person name="Hensch T.K."/>
            <person name="Hirokawa N."/>
            <person name="Hill D."/>
            <person name="Huminiecki L."/>
            <person name="Iacono M."/>
            <person name="Ikeo K."/>
            <person name="Iwama A."/>
            <person name="Ishikawa T."/>
            <person name="Jakt M."/>
            <person name="Kanapin A."/>
            <person name="Katoh M."/>
            <person name="Kawasawa Y."/>
            <person name="Kelso J."/>
            <person name="Kitamura H."/>
            <person name="Kitano H."/>
            <person name="Kollias G."/>
            <person name="Krishnan S.P."/>
            <person name="Kruger A."/>
            <person name="Kummerfeld S.K."/>
            <person name="Kurochkin I.V."/>
            <person name="Lareau L.F."/>
            <person name="Lazarevic D."/>
            <person name="Lipovich L."/>
            <person name="Liu J."/>
            <person name="Liuni S."/>
            <person name="McWilliam S."/>
            <person name="Madan Babu M."/>
            <person name="Madera M."/>
            <person name="Marchionni L."/>
            <person name="Matsuda H."/>
            <person name="Matsuzawa S."/>
            <person name="Miki H."/>
            <person name="Mignone F."/>
            <person name="Miyake S."/>
            <person name="Morris K."/>
            <person name="Mottagui-Tabar S."/>
            <person name="Mulder N."/>
            <person name="Nakano N."/>
            <person name="Nakauchi H."/>
            <person name="Ng P."/>
            <person name="Nilsson R."/>
            <person name="Nishiguchi S."/>
            <person name="Nishikawa S."/>
            <person name="Nori F."/>
            <person name="Ohara O."/>
            <person name="Okazaki Y."/>
            <person name="Orlando V."/>
            <person name="Pang K.C."/>
            <person name="Pavan W.J."/>
            <person name="Pavesi G."/>
            <person name="Pesole G."/>
            <person name="Petrovsky N."/>
            <person name="Piazza S."/>
            <person name="Reed J."/>
            <person name="Reid J.F."/>
            <person name="Ring B.Z."/>
            <person name="Ringwald M."/>
            <person name="Rost B."/>
            <person name="Ruan Y."/>
            <person name="Salzberg S.L."/>
            <person name="Sandelin A."/>
            <person name="Schneider C."/>
            <person name="Schoenbach C."/>
            <person name="Sekiguchi K."/>
            <person name="Semple C.A."/>
            <person name="Seno S."/>
            <person name="Sessa L."/>
            <person name="Sheng Y."/>
            <person name="Shibata Y."/>
            <person name="Shimada H."/>
            <person name="Shimada K."/>
            <person name="Silva D."/>
            <person name="Sinclair B."/>
            <person name="Sperling S."/>
            <person name="Stupka E."/>
            <person name="Sugiura K."/>
            <person name="Sultana R."/>
            <person name="Takenaka Y."/>
            <person name="Taki K."/>
            <person name="Tammoja K."/>
            <person name="Tan S.L."/>
            <person name="Tang S."/>
            <person name="Taylor M.S."/>
            <person name="Tegner J."/>
            <person name="Teichmann S.A."/>
            <person name="Ueda H.R."/>
            <person name="van Nimwegen E."/>
            <person name="Verardo R."/>
            <person name="Wei C.L."/>
            <person name="Yagi K."/>
            <person name="Yamanishi H."/>
            <person name="Zabarovsky E."/>
            <person name="Zhu S."/>
            <person name="Zimmer A."/>
            <person name="Hide W."/>
            <person name="Bult C."/>
            <person name="Grimmond S.M."/>
            <person name="Teasdale R.D."/>
            <person name="Liu E.T."/>
            <person name="Brusic V."/>
            <person name="Quackenbush J."/>
            <person name="Wahlestedt C."/>
            <person name="Mattick J.S."/>
            <person name="Hume D.A."/>
            <person name="Kai C."/>
            <person name="Sasaki D."/>
            <person name="Tomaru Y."/>
            <person name="Fukuda S."/>
            <person name="Kanamori-Katayama M."/>
            <person name="Suzuki M."/>
            <person name="Aoki J."/>
            <person name="Arakawa T."/>
            <person name="Iida J."/>
            <person name="Imamura K."/>
            <person name="Itoh M."/>
            <person name="Kato T."/>
            <person name="Kawaji H."/>
            <person name="Kawagashira N."/>
            <person name="Kawashima T."/>
            <person name="Kojima M."/>
            <person name="Kondo S."/>
            <person name="Konno H."/>
            <person name="Nakano K."/>
            <person name="Ninomiya N."/>
            <person name="Nishio T."/>
            <person name="Okada M."/>
            <person name="Plessy C."/>
            <person name="Shibata K."/>
            <person name="Shiraki T."/>
            <person name="Suzuki S."/>
            <person name="Tagami M."/>
            <person name="Waki K."/>
            <person name="Watahiki A."/>
            <person name="Okamura-Oho Y."/>
            <person name="Suzuki H."/>
            <person name="Kawai J."/>
            <person name="Hayashizaki Y."/>
        </authorList>
    </citation>
    <scope>NUCLEOTIDE SEQUENCE [LARGE SCALE MRNA]</scope>
    <source>
        <strain>C57BL/6J</strain>
        <tissue>Bone marrow</tissue>
        <tissue>Mesonephros</tissue>
    </source>
</reference>
<reference key="3">
    <citation type="journal article" date="2004" name="Genome Res.">
        <title>The status, quality, and expansion of the NIH full-length cDNA project: the Mammalian Gene Collection (MGC).</title>
        <authorList>
            <consortium name="The MGC Project Team"/>
        </authorList>
    </citation>
    <scope>NUCLEOTIDE SEQUENCE [LARGE SCALE MRNA]</scope>
    <source>
        <strain>FVB/N-3</strain>
        <tissue>Mammary gland</tissue>
    </source>
</reference>
<reference key="4">
    <citation type="journal article" date="2010" name="Cell">
        <title>A tissue-specific atlas of mouse protein phosphorylation and expression.</title>
        <authorList>
            <person name="Huttlin E.L."/>
            <person name="Jedrychowski M.P."/>
            <person name="Elias J.E."/>
            <person name="Goswami T."/>
            <person name="Rad R."/>
            <person name="Beausoleil S.A."/>
            <person name="Villen J."/>
            <person name="Haas W."/>
            <person name="Sowa M.E."/>
            <person name="Gygi S.P."/>
        </authorList>
    </citation>
    <scope>IDENTIFICATION BY MASS SPECTROMETRY [LARGE SCALE ANALYSIS]</scope>
    <source>
        <tissue>Brain</tissue>
        <tissue>Kidney</tissue>
        <tissue>Liver</tissue>
        <tissue>Pancreas</tissue>
        <tissue>Spleen</tissue>
        <tissue>Testis</tissue>
    </source>
</reference>
<reference key="5">
    <citation type="journal article" date="2012" name="Mol. Cell. Biol.">
        <title>A novel 4EHP-GIGYF2 translational repressor complex is essential for mammalian development.</title>
        <authorList>
            <person name="Morita M."/>
            <person name="Ler L.W."/>
            <person name="Fabian M.R."/>
            <person name="Siddiqui N."/>
            <person name="Mullin M."/>
            <person name="Henderson V.C."/>
            <person name="Alain T."/>
            <person name="Fonseca B.D."/>
            <person name="Karashchuk G."/>
            <person name="Bennett C.F."/>
            <person name="Kabuta T."/>
            <person name="Higashi S."/>
            <person name="Larsson O."/>
            <person name="Topisirovic I."/>
            <person name="Smith R.J."/>
            <person name="Gingras A.C."/>
            <person name="Sonenberg N."/>
        </authorList>
    </citation>
    <scope>DISRUPTION PHENOTYPE</scope>
</reference>
<comment type="function">
    <text evidence="1 4">Recognizes and binds the 7-methylguanosine-containing mRNA cap during an early step in the initiation (PubMed:15153109). Acts as a repressor of translation initiation (By similarity). In contrast to EIF4E, it is unable to bind eIF4G (EIF4G1, EIF4G2 or EIF4G3), suggesting that it acts by competing with EIF4E and block assembly of eIF4F at the cap (PubMed:15153109). In P-bodies, component of a complex that promotes miRNA-mediated translational repression (By similarity). Involved in virus-induced host response by mediating miRNA MIR34A-induced translational silencing which controls IFNB1 production by a negative feedback mechanism (By similarity).</text>
</comment>
<comment type="function">
    <text evidence="1">Component of the 4EHP-GYF2 complex, a multiprotein complex that acts as a repressor of translation initiation. In association with GIGYF2, assists ribosome-associated quality control (RQC) by sequestering the mRNA cap, blocking ribosome initiation and decreasing the translational load on problematic messages. Part of a pathway that works in parallel to RQC-mediated degradation of the stalled nascent polypeptide. GIGYF2 and EIF4E2 work downstream and independently of ZNF598, which seems to work as a scaffold that can recruit them to faulty mRNA even if alternative recruitment mechanisms may exist.</text>
</comment>
<comment type="subunit">
    <text evidence="1 4">Interacts with EIF4EBP1, EIF4EBP2 and EIF4EBP3 (PubMed:15153109). Does not interact with eIF4G (EIF4G1, EIF4G2 or EIF4G3) (PubMed:15153109). Component of the 4EHP-GYF2 complex, at least composed of EIF4E2, GIGYF2 and ZNF598 (By similarity). Interacts with GIGYF2 (via the 4EHP-binding motif); the interaction is direct (By similarity). Interacts with EIF4ENIF1/4E-T (via YXXXXLphi motif); increasing affinity for the 7-methylguanosine-containing mRNA cap (By similarity).</text>
</comment>
<comment type="subcellular location">
    <subcellularLocation>
        <location evidence="1">Cytoplasm</location>
    </subcellularLocation>
    <subcellularLocation>
        <location evidence="1">Cytoplasm</location>
        <location evidence="1">P-body</location>
    </subcellularLocation>
</comment>
<comment type="tissue specificity">
    <text evidence="4">Widely expressed with highest levels in testis, kidney and liver.</text>
</comment>
<comment type="PTM">
    <text evidence="1">Ubiquitinated by ARIH1. The consequences of ubiquitination are however unclear: according to a report, EIF4E2 ubiquitination leads to promote EIF4E2 cap-binding and protein translation arrest. According to another report ubiquitination leads to its subsequent degradation.</text>
</comment>
<comment type="PTM">
    <text evidence="1">ISGylation enhances its cap structure-binding activity and translation-inhibition activity.</text>
</comment>
<comment type="disruption phenotype">
    <text evidence="5">Lethality; mice die just before birth.</text>
</comment>
<comment type="similarity">
    <text evidence="7">Belongs to the eukaryotic initiation factor 4E family.</text>
</comment>